<dbReference type="EC" id="1.8.-.-"/>
<dbReference type="EMBL" id="AC022522">
    <property type="protein sequence ID" value="AAG12577.1"/>
    <property type="molecule type" value="Genomic_DNA"/>
</dbReference>
<dbReference type="EMBL" id="CP002684">
    <property type="protein sequence ID" value="AEE28844.1"/>
    <property type="molecule type" value="Genomic_DNA"/>
</dbReference>
<dbReference type="EMBL" id="BT030389">
    <property type="protein sequence ID" value="ABO45692.1"/>
    <property type="molecule type" value="mRNA"/>
</dbReference>
<dbReference type="PIR" id="F86256">
    <property type="entry name" value="F86256"/>
</dbReference>
<dbReference type="RefSeq" id="NP_172680.1">
    <property type="nucleotide sequence ID" value="NM_101088.4"/>
</dbReference>
<dbReference type="SMR" id="Q9FWW6"/>
<dbReference type="BioGRID" id="23008">
    <property type="interactions" value="2"/>
</dbReference>
<dbReference type="FunCoup" id="Q9FWW6">
    <property type="interactions" value="416"/>
</dbReference>
<dbReference type="IntAct" id="Q9FWW6">
    <property type="interactions" value="1"/>
</dbReference>
<dbReference type="STRING" id="3702.Q9FWW6"/>
<dbReference type="PaxDb" id="3702-AT1G12160.1"/>
<dbReference type="ProteomicsDB" id="247193"/>
<dbReference type="EnsemblPlants" id="AT1G12160.1">
    <property type="protein sequence ID" value="AT1G12160.1"/>
    <property type="gene ID" value="AT1G12160"/>
</dbReference>
<dbReference type="GeneID" id="837768"/>
<dbReference type="Gramene" id="AT1G12160.1">
    <property type="protein sequence ID" value="AT1G12160.1"/>
    <property type="gene ID" value="AT1G12160"/>
</dbReference>
<dbReference type="KEGG" id="ath:AT1G12160"/>
<dbReference type="Araport" id="AT1G12160"/>
<dbReference type="TAIR" id="AT1G12160">
    <property type="gene designation" value="FMOGS-OX7"/>
</dbReference>
<dbReference type="eggNOG" id="KOG1399">
    <property type="taxonomic scope" value="Eukaryota"/>
</dbReference>
<dbReference type="HOGENOM" id="CLU_006909_3_0_1"/>
<dbReference type="InParanoid" id="Q9FWW6"/>
<dbReference type="OMA" id="LYQHVVW"/>
<dbReference type="PhylomeDB" id="Q9FWW6"/>
<dbReference type="BioCyc" id="ARA:AT1G12160-MONOMER"/>
<dbReference type="PRO" id="PR:Q9FWW6"/>
<dbReference type="Proteomes" id="UP000006548">
    <property type="component" value="Chromosome 1"/>
</dbReference>
<dbReference type="ExpressionAtlas" id="Q9FWW6">
    <property type="expression patterns" value="baseline and differential"/>
</dbReference>
<dbReference type="GO" id="GO:0050660">
    <property type="term" value="F:flavin adenine dinucleotide binding"/>
    <property type="evidence" value="ECO:0007669"/>
    <property type="project" value="InterPro"/>
</dbReference>
<dbReference type="GO" id="GO:0004499">
    <property type="term" value="F:N,N-dimethylaniline monooxygenase activity"/>
    <property type="evidence" value="ECO:0007669"/>
    <property type="project" value="InterPro"/>
</dbReference>
<dbReference type="GO" id="GO:0050661">
    <property type="term" value="F:NADP binding"/>
    <property type="evidence" value="ECO:0007669"/>
    <property type="project" value="InterPro"/>
</dbReference>
<dbReference type="GO" id="GO:0019761">
    <property type="term" value="P:glucosinolate biosynthetic process"/>
    <property type="evidence" value="ECO:0000315"/>
    <property type="project" value="TAIR"/>
</dbReference>
<dbReference type="GO" id="GO:0009753">
    <property type="term" value="P:response to jasmonic acid"/>
    <property type="evidence" value="ECO:0000270"/>
    <property type="project" value="TAIR"/>
</dbReference>
<dbReference type="GO" id="GO:0009751">
    <property type="term" value="P:response to salicylic acid"/>
    <property type="evidence" value="ECO:0000270"/>
    <property type="project" value="TAIR"/>
</dbReference>
<dbReference type="FunFam" id="3.50.50.60:FF:000099">
    <property type="entry name" value="Flavin-containing monooxygenase"/>
    <property type="match status" value="1"/>
</dbReference>
<dbReference type="Gene3D" id="3.50.50.60">
    <property type="entry name" value="FAD/NAD(P)-binding domain"/>
    <property type="match status" value="2"/>
</dbReference>
<dbReference type="InterPro" id="IPR036188">
    <property type="entry name" value="FAD/NAD-bd_sf"/>
</dbReference>
<dbReference type="InterPro" id="IPR000960">
    <property type="entry name" value="Flavin_mOase"/>
</dbReference>
<dbReference type="InterPro" id="IPR020946">
    <property type="entry name" value="Flavin_mOase-like"/>
</dbReference>
<dbReference type="InterPro" id="IPR050346">
    <property type="entry name" value="FMO-like"/>
</dbReference>
<dbReference type="PANTHER" id="PTHR23023">
    <property type="entry name" value="DIMETHYLANILINE MONOOXYGENASE"/>
    <property type="match status" value="1"/>
</dbReference>
<dbReference type="Pfam" id="PF00743">
    <property type="entry name" value="FMO-like"/>
    <property type="match status" value="2"/>
</dbReference>
<dbReference type="PRINTS" id="PR00370">
    <property type="entry name" value="FMOXYGENASE"/>
</dbReference>
<dbReference type="SUPFAM" id="SSF51905">
    <property type="entry name" value="FAD/NAD(P)-binding domain"/>
    <property type="match status" value="2"/>
</dbReference>
<feature type="chain" id="PRO_0000401956" description="Flavin-containing monooxygenase FMO GS-OX-like 1">
    <location>
        <begin position="1"/>
        <end position="468"/>
    </location>
</feature>
<feature type="binding site" evidence="2">
    <location>
        <begin position="16"/>
        <end position="21"/>
    </location>
    <ligand>
        <name>FAD</name>
        <dbReference type="ChEBI" id="CHEBI:57692"/>
    </ligand>
</feature>
<feature type="binding site" evidence="2">
    <location>
        <begin position="211"/>
        <end position="216"/>
    </location>
    <ligand>
        <name>NADP(+)</name>
        <dbReference type="ChEBI" id="CHEBI:58349"/>
    </ligand>
</feature>
<gene>
    <name type="ordered locus">At1g12160</name>
    <name type="ORF">T28K15.10</name>
</gene>
<proteinExistence type="evidence at transcript level"/>
<evidence type="ECO:0000250" key="1"/>
<evidence type="ECO:0000255" key="2"/>
<evidence type="ECO:0000305" key="3"/>
<keyword id="KW-0274">FAD</keyword>
<keyword id="KW-0285">Flavoprotein</keyword>
<keyword id="KW-0503">Monooxygenase</keyword>
<keyword id="KW-0521">NADP</keyword>
<keyword id="KW-0560">Oxidoreductase</keyword>
<keyword id="KW-1185">Reference proteome</keyword>
<sequence length="468" mass="53271">MTSVITSRARHVAVIGLGAAGLVAVRELRREGHTVIGFEREKHVGGLWVYTDRVDSDSVSVDPDRTIVHSSIYQSLRTNLPRECMGYSDFPFVTRSSDGDPRRYPDHREVLMYLQDFAKEFKIEDMIRFETEVLCVEPSPENNRKWRVQFKSSNGVSGEEIFDAVVVCNGHFTEPRLAHIPGIESWPGKQIHSHNYRIPDPFKDEVVIVIGSQASGNDISTDIATIAKEVHISSKMVASDSYGCYDNLRIHPTIYRAREDGSVVFRNGKVVFADAIVHCTGYKYHFPFLKTSGYVTVEDNRVGPLYKHVFPPALAPGISFIGLPFMGLQFFMFEIQSKWVASVLSGRVKLPAEDKMMEEAVAFYSKLEDLGIPKRYTHFLTDPRGNPMLGTFKPEDAVVISQSDYFNWIAKQCGCTSIERWRERLYNVAIKKVFFGGDSYRDRWDDDQLIEEVYREFAKLKPNQDCSS</sequence>
<comment type="function">
    <text evidence="1">Catalyzes the conversion of methylthioalkyl glucosinolates of any chain length into methylsulfinylalkyl glucosinolates.</text>
</comment>
<comment type="cofactor">
    <cofactor evidence="1">
        <name>FAD</name>
        <dbReference type="ChEBI" id="CHEBI:57692"/>
    </cofactor>
</comment>
<comment type="similarity">
    <text evidence="3">Belongs to the FMO family.</text>
</comment>
<accession>Q9FWW6</accession>
<protein>
    <recommendedName>
        <fullName>Flavin-containing monooxygenase FMO GS-OX-like 1</fullName>
        <ecNumber>1.8.-.-</ecNumber>
    </recommendedName>
    <alternativeName>
        <fullName>Flavin-monooxygenase glucosinolate S-oxygenase-like 1</fullName>
    </alternativeName>
</protein>
<name>GSXL1_ARATH</name>
<reference key="1">
    <citation type="journal article" date="2000" name="Nature">
        <title>Sequence and analysis of chromosome 1 of the plant Arabidopsis thaliana.</title>
        <authorList>
            <person name="Theologis A."/>
            <person name="Ecker J.R."/>
            <person name="Palm C.J."/>
            <person name="Federspiel N.A."/>
            <person name="Kaul S."/>
            <person name="White O."/>
            <person name="Alonso J."/>
            <person name="Altafi H."/>
            <person name="Araujo R."/>
            <person name="Bowman C.L."/>
            <person name="Brooks S.Y."/>
            <person name="Buehler E."/>
            <person name="Chan A."/>
            <person name="Chao Q."/>
            <person name="Chen H."/>
            <person name="Cheuk R.F."/>
            <person name="Chin C.W."/>
            <person name="Chung M.K."/>
            <person name="Conn L."/>
            <person name="Conway A.B."/>
            <person name="Conway A.R."/>
            <person name="Creasy T.H."/>
            <person name="Dewar K."/>
            <person name="Dunn P."/>
            <person name="Etgu P."/>
            <person name="Feldblyum T.V."/>
            <person name="Feng J.-D."/>
            <person name="Fong B."/>
            <person name="Fujii C.Y."/>
            <person name="Gill J.E."/>
            <person name="Goldsmith A.D."/>
            <person name="Haas B."/>
            <person name="Hansen N.F."/>
            <person name="Hughes B."/>
            <person name="Huizar L."/>
            <person name="Hunter J.L."/>
            <person name="Jenkins J."/>
            <person name="Johnson-Hopson C."/>
            <person name="Khan S."/>
            <person name="Khaykin E."/>
            <person name="Kim C.J."/>
            <person name="Koo H.L."/>
            <person name="Kremenetskaia I."/>
            <person name="Kurtz D.B."/>
            <person name="Kwan A."/>
            <person name="Lam B."/>
            <person name="Langin-Hooper S."/>
            <person name="Lee A."/>
            <person name="Lee J.M."/>
            <person name="Lenz C.A."/>
            <person name="Li J.H."/>
            <person name="Li Y.-P."/>
            <person name="Lin X."/>
            <person name="Liu S.X."/>
            <person name="Liu Z.A."/>
            <person name="Luros J.S."/>
            <person name="Maiti R."/>
            <person name="Marziali A."/>
            <person name="Militscher J."/>
            <person name="Miranda M."/>
            <person name="Nguyen M."/>
            <person name="Nierman W.C."/>
            <person name="Osborne B.I."/>
            <person name="Pai G."/>
            <person name="Peterson J."/>
            <person name="Pham P.K."/>
            <person name="Rizzo M."/>
            <person name="Rooney T."/>
            <person name="Rowley D."/>
            <person name="Sakano H."/>
            <person name="Salzberg S.L."/>
            <person name="Schwartz J.R."/>
            <person name="Shinn P."/>
            <person name="Southwick A.M."/>
            <person name="Sun H."/>
            <person name="Tallon L.J."/>
            <person name="Tambunga G."/>
            <person name="Toriumi M.J."/>
            <person name="Town C.D."/>
            <person name="Utterback T."/>
            <person name="Van Aken S."/>
            <person name="Vaysberg M."/>
            <person name="Vysotskaia V.S."/>
            <person name="Walker M."/>
            <person name="Wu D."/>
            <person name="Yu G."/>
            <person name="Fraser C.M."/>
            <person name="Venter J.C."/>
            <person name="Davis R.W."/>
        </authorList>
    </citation>
    <scope>NUCLEOTIDE SEQUENCE [LARGE SCALE GENOMIC DNA]</scope>
    <source>
        <strain>cv. Columbia</strain>
    </source>
</reference>
<reference key="2">
    <citation type="journal article" date="2017" name="Plant J.">
        <title>Araport11: a complete reannotation of the Arabidopsis thaliana reference genome.</title>
        <authorList>
            <person name="Cheng C.Y."/>
            <person name="Krishnakumar V."/>
            <person name="Chan A.P."/>
            <person name="Thibaud-Nissen F."/>
            <person name="Schobel S."/>
            <person name="Town C.D."/>
        </authorList>
    </citation>
    <scope>GENOME REANNOTATION</scope>
    <source>
        <strain>cv. Columbia</strain>
    </source>
</reference>
<reference key="3">
    <citation type="submission" date="2007-03" db="EMBL/GenBank/DDBJ databases">
        <title>Arabidopsis ORF clones.</title>
        <authorList>
            <person name="Kim C.J."/>
            <person name="Bautista V.R."/>
            <person name="Chen H."/>
            <person name="De Los Reyes C."/>
            <person name="Wu S.Y."/>
            <person name="Ecker J.R."/>
        </authorList>
    </citation>
    <scope>NUCLEOTIDE SEQUENCE [LARGE SCALE MRNA]</scope>
    <source>
        <strain>cv. Columbia</strain>
    </source>
</reference>
<reference key="4">
    <citation type="journal article" date="2007" name="Plant J.">
        <title>Identification of a flavin-monooxygenase as the S-oxygenating enzyme in aliphatic glucosinolate biosynthesis in Arabidopsis.</title>
        <authorList>
            <person name="Hansen B.G."/>
            <person name="Kliebenstein D.J."/>
            <person name="Halkier B.A."/>
        </authorList>
    </citation>
    <scope>GENE FAMILY</scope>
    <source>
        <strain>cv. Columbia</strain>
    </source>
</reference>
<organism>
    <name type="scientific">Arabidopsis thaliana</name>
    <name type="common">Mouse-ear cress</name>
    <dbReference type="NCBI Taxonomy" id="3702"/>
    <lineage>
        <taxon>Eukaryota</taxon>
        <taxon>Viridiplantae</taxon>
        <taxon>Streptophyta</taxon>
        <taxon>Embryophyta</taxon>
        <taxon>Tracheophyta</taxon>
        <taxon>Spermatophyta</taxon>
        <taxon>Magnoliopsida</taxon>
        <taxon>eudicotyledons</taxon>
        <taxon>Gunneridae</taxon>
        <taxon>Pentapetalae</taxon>
        <taxon>rosids</taxon>
        <taxon>malvids</taxon>
        <taxon>Brassicales</taxon>
        <taxon>Brassicaceae</taxon>
        <taxon>Camelineae</taxon>
        <taxon>Arabidopsis</taxon>
    </lineage>
</organism>